<gene>
    <name type="primary">HVG1</name>
    <name type="synonym">YEM9</name>
    <name type="ORF">C1Q_03335</name>
</gene>
<organism>
    <name type="scientific">Saccharomyces cerevisiae (strain JAY291)</name>
    <name type="common">Baker's yeast</name>
    <dbReference type="NCBI Taxonomy" id="574961"/>
    <lineage>
        <taxon>Eukaryota</taxon>
        <taxon>Fungi</taxon>
        <taxon>Dikarya</taxon>
        <taxon>Ascomycota</taxon>
        <taxon>Saccharomycotina</taxon>
        <taxon>Saccharomycetes</taxon>
        <taxon>Saccharomycetales</taxon>
        <taxon>Saccharomycetaceae</taxon>
        <taxon>Saccharomyces</taxon>
    </lineage>
</organism>
<accession>C7GSI5</accession>
<evidence type="ECO:0000250" key="1"/>
<evidence type="ECO:0000255" key="2"/>
<evidence type="ECO:0000305" key="3"/>
<feature type="chain" id="PRO_0000391670" description="Probable GDP-mannose transporter 2">
    <location>
        <begin position="1"/>
        <end position="249"/>
    </location>
</feature>
<feature type="topological domain" description="Lumenal" evidence="2">
    <location>
        <begin position="1"/>
        <end position="15"/>
    </location>
</feature>
<feature type="transmembrane region" description="Helical" evidence="2">
    <location>
        <begin position="16"/>
        <end position="36"/>
    </location>
</feature>
<feature type="topological domain" description="Cytoplasmic" evidence="2">
    <location>
        <begin position="37"/>
        <end position="47"/>
    </location>
</feature>
<feature type="transmembrane region" description="Helical" evidence="2">
    <location>
        <begin position="48"/>
        <end position="68"/>
    </location>
</feature>
<feature type="topological domain" description="Lumenal" evidence="2">
    <location>
        <begin position="69"/>
        <end position="84"/>
    </location>
</feature>
<feature type="transmembrane region" description="Helical" evidence="2">
    <location>
        <begin position="85"/>
        <end position="105"/>
    </location>
</feature>
<feature type="topological domain" description="Cytoplasmic" evidence="2">
    <location>
        <begin position="106"/>
        <end position="122"/>
    </location>
</feature>
<feature type="transmembrane region" description="Helical" evidence="2">
    <location>
        <begin position="123"/>
        <end position="143"/>
    </location>
</feature>
<feature type="topological domain" description="Lumenal" evidence="2">
    <location>
        <begin position="144"/>
        <end position="159"/>
    </location>
</feature>
<feature type="transmembrane region" description="Helical" evidence="2">
    <location>
        <begin position="160"/>
        <end position="180"/>
    </location>
</feature>
<feature type="topological domain" description="Cytoplasmic" evidence="2">
    <location>
        <begin position="181"/>
        <end position="186"/>
    </location>
</feature>
<feature type="transmembrane region" description="Helical" evidence="2">
    <location>
        <begin position="187"/>
        <end position="207"/>
    </location>
</feature>
<feature type="topological domain" description="Lumenal" evidence="2">
    <location>
        <begin position="208"/>
        <end position="211"/>
    </location>
</feature>
<feature type="transmembrane region" description="Helical" evidence="2">
    <location>
        <begin position="212"/>
        <end position="232"/>
    </location>
</feature>
<feature type="topological domain" description="Cytoplasmic" evidence="2">
    <location>
        <begin position="233"/>
        <end position="249"/>
    </location>
</feature>
<feature type="glycosylation site" description="N-linked (GlcNAc...) asparagine" evidence="2">
    <location>
        <position position="149"/>
    </location>
</feature>
<feature type="glycosylation site" description="N-linked (GlcNAc...) asparagine" evidence="2">
    <location>
        <position position="153"/>
    </location>
</feature>
<comment type="function">
    <text evidence="1">Involved in the import of GDP-mannose from the cytoplasm into the Golgi lumen.</text>
</comment>
<comment type="subcellular location">
    <subcellularLocation>
        <location evidence="1">Golgi apparatus membrane</location>
        <topology evidence="1">Multi-pass membrane protein</topology>
    </subcellularLocation>
    <subcellularLocation>
        <location evidence="1">Cytoplasmic vesicle membrane</location>
        <topology evidence="1">Multi-pass membrane protein</topology>
    </subcellularLocation>
    <subcellularLocation>
        <location evidence="1">Endoplasmic reticulum membrane</location>
        <topology evidence="1">Multi-pass membrane protein</topology>
    </subcellularLocation>
    <text evidence="1">Recycles between the Golgi apparatus and the endoplasmic reticulum.</text>
</comment>
<comment type="similarity">
    <text evidence="3">Belongs to the TPT transporter family. SLC35D subfamily.</text>
</comment>
<comment type="caution">
    <text evidence="3">This is a truncated version of GDP-mannose transporter 2. This strain has a stop codon in position 73, which disrupts the gene coding for this protein and produces two ORFs. A contiguous sequence for GDP-mannose transporter 2 can be found in strain Lalvin EC1118 (AC C8Z742).</text>
</comment>
<dbReference type="EMBL" id="ACFL01000192">
    <property type="protein sequence ID" value="EEU06221.1"/>
    <property type="molecule type" value="Genomic_DNA"/>
</dbReference>
<dbReference type="SMR" id="C7GSI5"/>
<dbReference type="GlyCosmos" id="C7GSI5">
    <property type="glycosylation" value="2 sites, No reported glycans"/>
</dbReference>
<dbReference type="Proteomes" id="UP000008073">
    <property type="component" value="Unassembled WGS sequence"/>
</dbReference>
<dbReference type="GO" id="GO:0030659">
    <property type="term" value="C:cytoplasmic vesicle membrane"/>
    <property type="evidence" value="ECO:0007669"/>
    <property type="project" value="UniProtKB-SubCell"/>
</dbReference>
<dbReference type="GO" id="GO:0005789">
    <property type="term" value="C:endoplasmic reticulum membrane"/>
    <property type="evidence" value="ECO:0007669"/>
    <property type="project" value="UniProtKB-SubCell"/>
</dbReference>
<dbReference type="GO" id="GO:0000139">
    <property type="term" value="C:Golgi membrane"/>
    <property type="evidence" value="ECO:0007669"/>
    <property type="project" value="UniProtKB-SubCell"/>
</dbReference>
<dbReference type="GO" id="GO:0055085">
    <property type="term" value="P:transmembrane transport"/>
    <property type="evidence" value="ECO:0007669"/>
    <property type="project" value="InterPro"/>
</dbReference>
<dbReference type="InterPro" id="IPR013657">
    <property type="entry name" value="SCL35B1-4/HUT1"/>
</dbReference>
<dbReference type="InterPro" id="IPR050186">
    <property type="entry name" value="TPT_transporter"/>
</dbReference>
<dbReference type="NCBIfam" id="TIGR00803">
    <property type="entry name" value="nst"/>
    <property type="match status" value="1"/>
</dbReference>
<dbReference type="PANTHER" id="PTHR11132">
    <property type="entry name" value="SOLUTE CARRIER FAMILY 35"/>
    <property type="match status" value="1"/>
</dbReference>
<dbReference type="Pfam" id="PF08449">
    <property type="entry name" value="UAA"/>
    <property type="match status" value="1"/>
</dbReference>
<dbReference type="SUPFAM" id="SSF103481">
    <property type="entry name" value="Multidrug resistance efflux transporter EmrE"/>
    <property type="match status" value="1"/>
</dbReference>
<reference key="1">
    <citation type="journal article" date="2009" name="Genome Res.">
        <title>Genome structure of a Saccharomyces cerevisiae strain widely used in bioethanol production.</title>
        <authorList>
            <person name="Argueso J.L."/>
            <person name="Carazzolle M.F."/>
            <person name="Mieczkowski P.A."/>
            <person name="Duarte F.M."/>
            <person name="Netto O.V.C."/>
            <person name="Missawa S.K."/>
            <person name="Galzerani F."/>
            <person name="Costa G.G.L."/>
            <person name="Vidal R.O."/>
            <person name="Noronha M.F."/>
            <person name="Dominska M."/>
            <person name="Andrietta M.G.S."/>
            <person name="Andrietta S.R."/>
            <person name="Cunha A.F."/>
            <person name="Gomes L.H."/>
            <person name="Tavares F.C.A."/>
            <person name="Alcarde A.R."/>
            <person name="Dietrich F.S."/>
            <person name="McCusker J.H."/>
            <person name="Petes T.D."/>
            <person name="Pereira G.A.G."/>
        </authorList>
    </citation>
    <scope>NUCLEOTIDE SEQUENCE [LARGE SCALE GENOMIC DNA]</scope>
    <source>
        <strain>JAY291</strain>
    </source>
</reference>
<keyword id="KW-0968">Cytoplasmic vesicle</keyword>
<keyword id="KW-0256">Endoplasmic reticulum</keyword>
<keyword id="KW-0325">Glycoprotein</keyword>
<keyword id="KW-0333">Golgi apparatus</keyword>
<keyword id="KW-0472">Membrane</keyword>
<keyword id="KW-0762">Sugar transport</keyword>
<keyword id="KW-0812">Transmembrane</keyword>
<keyword id="KW-1133">Transmembrane helix</keyword>
<keyword id="KW-0813">Transport</keyword>
<sequence length="249" mass="27688">MIYTSSKSLQYLAVPIYTIFKNLTIILIAYGEVLFFGGKVTSMELTSFIMMVLSSVVATWGDQQAIAIKASSLEDLDQELVESTIFVLNPGYLWMFTNCISSALFVLIMRKRIRLTNFKDYDTMFYNNVLALPLLLVFSFIMEDWSTKNLSVNLSADSLAAMVISGLMSVGISYCSGWCVRVTSSTTYSMVGALNKLPIALAGLVFFDAPKNFLSFFSIFLGFLSGLLYAVAKQKKIQQQKVLAATLEK</sequence>
<name>GMT2_YEAS2</name>
<protein>
    <recommendedName>
        <fullName>Probable GDP-mannose transporter 2</fullName>
        <shortName>GMT 2</shortName>
    </recommendedName>
</protein>
<proteinExistence type="inferred from homology"/>